<organism>
    <name type="scientific">Homo sapiens</name>
    <name type="common">Human</name>
    <dbReference type="NCBI Taxonomy" id="9606"/>
    <lineage>
        <taxon>Eukaryota</taxon>
        <taxon>Metazoa</taxon>
        <taxon>Chordata</taxon>
        <taxon>Craniata</taxon>
        <taxon>Vertebrata</taxon>
        <taxon>Euteleostomi</taxon>
        <taxon>Mammalia</taxon>
        <taxon>Eutheria</taxon>
        <taxon>Euarchontoglires</taxon>
        <taxon>Primates</taxon>
        <taxon>Haplorrhini</taxon>
        <taxon>Catarrhini</taxon>
        <taxon>Hominidae</taxon>
        <taxon>Homo</taxon>
    </lineage>
</organism>
<accession>Q3MHD2</accession>
<accession>Q86YB1</accession>
<accession>Q96NL5</accession>
<proteinExistence type="evidence at protein level"/>
<keyword id="KW-0007">Acetylation</keyword>
<keyword id="KW-0025">Alternative splicing</keyword>
<keyword id="KW-0963">Cytoplasm</keyword>
<keyword id="KW-0903">Direct protein sequencing</keyword>
<keyword id="KW-0597">Phosphoprotein</keyword>
<keyword id="KW-1267">Proteomics identification</keyword>
<keyword id="KW-1185">Reference proteome</keyword>
<protein>
    <recommendedName>
        <fullName>Protein LSM12</fullName>
    </recommendedName>
</protein>
<sequence>MAAPPGEYFSVGSQVSCRTCQEQRLQGEVVAFDYQSKMLALKCPSSSGKPNHADILLINLQYVSEVEIINDRTETPPPLASLNVSKLASKARTEKEEKLSQAYAISAGVSLEGQQLFQTIHKTIKDCKWQEKNIVVMEEVVITPPYQVENCKGKEGSALSHVRKIVEKHFRDVESQKILQRSQAQQPQKEAALSS</sequence>
<reference key="1">
    <citation type="journal article" date="2004" name="Nat. Genet.">
        <title>Complete sequencing and characterization of 21,243 full-length human cDNAs.</title>
        <authorList>
            <person name="Ota T."/>
            <person name="Suzuki Y."/>
            <person name="Nishikawa T."/>
            <person name="Otsuki T."/>
            <person name="Sugiyama T."/>
            <person name="Irie R."/>
            <person name="Wakamatsu A."/>
            <person name="Hayashi K."/>
            <person name="Sato H."/>
            <person name="Nagai K."/>
            <person name="Kimura K."/>
            <person name="Makita H."/>
            <person name="Sekine M."/>
            <person name="Obayashi M."/>
            <person name="Nishi T."/>
            <person name="Shibahara T."/>
            <person name="Tanaka T."/>
            <person name="Ishii S."/>
            <person name="Yamamoto J."/>
            <person name="Saito K."/>
            <person name="Kawai Y."/>
            <person name="Isono Y."/>
            <person name="Nakamura Y."/>
            <person name="Nagahari K."/>
            <person name="Murakami K."/>
            <person name="Yasuda T."/>
            <person name="Iwayanagi T."/>
            <person name="Wagatsuma M."/>
            <person name="Shiratori A."/>
            <person name="Sudo H."/>
            <person name="Hosoiri T."/>
            <person name="Kaku Y."/>
            <person name="Kodaira H."/>
            <person name="Kondo H."/>
            <person name="Sugawara M."/>
            <person name="Takahashi M."/>
            <person name="Kanda K."/>
            <person name="Yokoi T."/>
            <person name="Furuya T."/>
            <person name="Kikkawa E."/>
            <person name="Omura Y."/>
            <person name="Abe K."/>
            <person name="Kamihara K."/>
            <person name="Katsuta N."/>
            <person name="Sato K."/>
            <person name="Tanikawa M."/>
            <person name="Yamazaki M."/>
            <person name="Ninomiya K."/>
            <person name="Ishibashi T."/>
            <person name="Yamashita H."/>
            <person name="Murakawa K."/>
            <person name="Fujimori K."/>
            <person name="Tanai H."/>
            <person name="Kimata M."/>
            <person name="Watanabe M."/>
            <person name="Hiraoka S."/>
            <person name="Chiba Y."/>
            <person name="Ishida S."/>
            <person name="Ono Y."/>
            <person name="Takiguchi S."/>
            <person name="Watanabe S."/>
            <person name="Yosida M."/>
            <person name="Hotuta T."/>
            <person name="Kusano J."/>
            <person name="Kanehori K."/>
            <person name="Takahashi-Fujii A."/>
            <person name="Hara H."/>
            <person name="Tanase T.-O."/>
            <person name="Nomura Y."/>
            <person name="Togiya S."/>
            <person name="Komai F."/>
            <person name="Hara R."/>
            <person name="Takeuchi K."/>
            <person name="Arita M."/>
            <person name="Imose N."/>
            <person name="Musashino K."/>
            <person name="Yuuki H."/>
            <person name="Oshima A."/>
            <person name="Sasaki N."/>
            <person name="Aotsuka S."/>
            <person name="Yoshikawa Y."/>
            <person name="Matsunawa H."/>
            <person name="Ichihara T."/>
            <person name="Shiohata N."/>
            <person name="Sano S."/>
            <person name="Moriya S."/>
            <person name="Momiyama H."/>
            <person name="Satoh N."/>
            <person name="Takami S."/>
            <person name="Terashima Y."/>
            <person name="Suzuki O."/>
            <person name="Nakagawa S."/>
            <person name="Senoh A."/>
            <person name="Mizoguchi H."/>
            <person name="Goto Y."/>
            <person name="Shimizu F."/>
            <person name="Wakebe H."/>
            <person name="Hishigaki H."/>
            <person name="Watanabe T."/>
            <person name="Sugiyama A."/>
            <person name="Takemoto M."/>
            <person name="Kawakami B."/>
            <person name="Yamazaki M."/>
            <person name="Watanabe K."/>
            <person name="Kumagai A."/>
            <person name="Itakura S."/>
            <person name="Fukuzumi Y."/>
            <person name="Fujimori Y."/>
            <person name="Komiyama M."/>
            <person name="Tashiro H."/>
            <person name="Tanigami A."/>
            <person name="Fujiwara T."/>
            <person name="Ono T."/>
            <person name="Yamada K."/>
            <person name="Fujii Y."/>
            <person name="Ozaki K."/>
            <person name="Hirao M."/>
            <person name="Ohmori Y."/>
            <person name="Kawabata A."/>
            <person name="Hikiji T."/>
            <person name="Kobatake N."/>
            <person name="Inagaki H."/>
            <person name="Ikema Y."/>
            <person name="Okamoto S."/>
            <person name="Okitani R."/>
            <person name="Kawakami T."/>
            <person name="Noguchi S."/>
            <person name="Itoh T."/>
            <person name="Shigeta K."/>
            <person name="Senba T."/>
            <person name="Matsumura K."/>
            <person name="Nakajima Y."/>
            <person name="Mizuno T."/>
            <person name="Morinaga M."/>
            <person name="Sasaki M."/>
            <person name="Togashi T."/>
            <person name="Oyama M."/>
            <person name="Hata H."/>
            <person name="Watanabe M."/>
            <person name="Komatsu T."/>
            <person name="Mizushima-Sugano J."/>
            <person name="Satoh T."/>
            <person name="Shirai Y."/>
            <person name="Takahashi Y."/>
            <person name="Nakagawa K."/>
            <person name="Okumura K."/>
            <person name="Nagase T."/>
            <person name="Nomura N."/>
            <person name="Kikuchi H."/>
            <person name="Masuho Y."/>
            <person name="Yamashita R."/>
            <person name="Nakai K."/>
            <person name="Yada T."/>
            <person name="Nakamura Y."/>
            <person name="Ohara O."/>
            <person name="Isogai T."/>
            <person name="Sugano S."/>
        </authorList>
    </citation>
    <scope>NUCLEOTIDE SEQUENCE [LARGE SCALE MRNA] (ISOFORM 1)</scope>
</reference>
<reference key="2">
    <citation type="journal article" date="2006" name="Nature">
        <title>DNA sequence of human chromosome 17 and analysis of rearrangement in the human lineage.</title>
        <authorList>
            <person name="Zody M.C."/>
            <person name="Garber M."/>
            <person name="Adams D.J."/>
            <person name="Sharpe T."/>
            <person name="Harrow J."/>
            <person name="Lupski J.R."/>
            <person name="Nicholson C."/>
            <person name="Searle S.M."/>
            <person name="Wilming L."/>
            <person name="Young S.K."/>
            <person name="Abouelleil A."/>
            <person name="Allen N.R."/>
            <person name="Bi W."/>
            <person name="Bloom T."/>
            <person name="Borowsky M.L."/>
            <person name="Bugalter B.E."/>
            <person name="Butler J."/>
            <person name="Chang J.L."/>
            <person name="Chen C.-K."/>
            <person name="Cook A."/>
            <person name="Corum B."/>
            <person name="Cuomo C.A."/>
            <person name="de Jong P.J."/>
            <person name="DeCaprio D."/>
            <person name="Dewar K."/>
            <person name="FitzGerald M."/>
            <person name="Gilbert J."/>
            <person name="Gibson R."/>
            <person name="Gnerre S."/>
            <person name="Goldstein S."/>
            <person name="Grafham D.V."/>
            <person name="Grocock R."/>
            <person name="Hafez N."/>
            <person name="Hagopian D.S."/>
            <person name="Hart E."/>
            <person name="Norman C.H."/>
            <person name="Humphray S."/>
            <person name="Jaffe D.B."/>
            <person name="Jones M."/>
            <person name="Kamal M."/>
            <person name="Khodiyar V.K."/>
            <person name="LaButti K."/>
            <person name="Laird G."/>
            <person name="Lehoczky J."/>
            <person name="Liu X."/>
            <person name="Lokyitsang T."/>
            <person name="Loveland J."/>
            <person name="Lui A."/>
            <person name="Macdonald P."/>
            <person name="Major J.E."/>
            <person name="Matthews L."/>
            <person name="Mauceli E."/>
            <person name="McCarroll S.A."/>
            <person name="Mihalev A.H."/>
            <person name="Mudge J."/>
            <person name="Nguyen C."/>
            <person name="Nicol R."/>
            <person name="O'Leary S.B."/>
            <person name="Osoegawa K."/>
            <person name="Schwartz D.C."/>
            <person name="Shaw-Smith C."/>
            <person name="Stankiewicz P."/>
            <person name="Steward C."/>
            <person name="Swarbreck D."/>
            <person name="Venkataraman V."/>
            <person name="Whittaker C.A."/>
            <person name="Yang X."/>
            <person name="Zimmer A.R."/>
            <person name="Bradley A."/>
            <person name="Hubbard T."/>
            <person name="Birren B.W."/>
            <person name="Rogers J."/>
            <person name="Lander E.S."/>
            <person name="Nusbaum C."/>
        </authorList>
    </citation>
    <scope>NUCLEOTIDE SEQUENCE [LARGE SCALE GENOMIC DNA]</scope>
</reference>
<reference key="3">
    <citation type="journal article" date="2004" name="Genome Res.">
        <title>The status, quality, and expansion of the NIH full-length cDNA project: the Mammalian Gene Collection (MGC).</title>
        <authorList>
            <consortium name="The MGC Project Team"/>
        </authorList>
    </citation>
    <scope>NUCLEOTIDE SEQUENCE [LARGE SCALE MRNA] (ISOFORM 1)</scope>
    <scope>NUCLEOTIDE SEQUENCE [LARGE SCALE MRNA] OF 1-128 (ISOFORM 2)</scope>
    <scope>VARIANT ARG-77</scope>
    <source>
        <tissue>Brain</tissue>
    </source>
</reference>
<reference key="4">
    <citation type="submission" date="2009-03" db="UniProtKB">
        <authorList>
            <person name="Bienvenut W.V."/>
            <person name="Waridel P."/>
            <person name="Quadroni M."/>
        </authorList>
    </citation>
    <scope>PROTEIN SEQUENCE OF 2-18; 25-37 AND 73-86</scope>
    <scope>CLEAVAGE OF INITIATOR METHIONINE</scope>
    <scope>ACETYLATION AT ALA-2</scope>
    <scope>IDENTIFICATION BY MASS SPECTROMETRY</scope>
    <source>
        <tissue>Cervix carcinoma</tissue>
    </source>
</reference>
<reference key="5">
    <citation type="journal article" date="2009" name="Anal. Chem.">
        <title>Lys-N and trypsin cover complementary parts of the phosphoproteome in a refined SCX-based approach.</title>
        <authorList>
            <person name="Gauci S."/>
            <person name="Helbig A.O."/>
            <person name="Slijper M."/>
            <person name="Krijgsveld J."/>
            <person name="Heck A.J."/>
            <person name="Mohammed S."/>
        </authorList>
    </citation>
    <scope>ACETYLATION [LARGE SCALE ANALYSIS] AT ALA-2</scope>
    <scope>CLEAVAGE OF INITIATOR METHIONINE [LARGE SCALE ANALYSIS]</scope>
    <scope>IDENTIFICATION BY MASS SPECTROMETRY [LARGE SCALE ANALYSIS]</scope>
</reference>
<reference key="6">
    <citation type="journal article" date="2009" name="Sci. Signal.">
        <title>Quantitative phosphoproteomic analysis of T cell receptor signaling reveals system-wide modulation of protein-protein interactions.</title>
        <authorList>
            <person name="Mayya V."/>
            <person name="Lundgren D.H."/>
            <person name="Hwang S.-I."/>
            <person name="Rezaul K."/>
            <person name="Wu L."/>
            <person name="Eng J.K."/>
            <person name="Rodionov V."/>
            <person name="Han D.K."/>
        </authorList>
    </citation>
    <scope>PHOSPHORYLATION [LARGE SCALE ANALYSIS] AT THR-75</scope>
    <scope>IDENTIFICATION BY MASS SPECTROMETRY [LARGE SCALE ANALYSIS]</scope>
    <source>
        <tissue>Leukemic T-cell</tissue>
    </source>
</reference>
<reference key="7">
    <citation type="journal article" date="2011" name="BMC Syst. Biol.">
        <title>Initial characterization of the human central proteome.</title>
        <authorList>
            <person name="Burkard T.R."/>
            <person name="Planyavsky M."/>
            <person name="Kaupe I."/>
            <person name="Breitwieser F.P."/>
            <person name="Buerckstuemmer T."/>
            <person name="Bennett K.L."/>
            <person name="Superti-Furga G."/>
            <person name="Colinge J."/>
        </authorList>
    </citation>
    <scope>IDENTIFICATION BY MASS SPECTROMETRY [LARGE SCALE ANALYSIS]</scope>
</reference>
<reference key="8">
    <citation type="journal article" date="2012" name="Proc. Natl. Acad. Sci. U.S.A.">
        <title>N-terminal acetylome analyses and functional insights of the N-terminal acetyltransferase NatB.</title>
        <authorList>
            <person name="Van Damme P."/>
            <person name="Lasa M."/>
            <person name="Polevoda B."/>
            <person name="Gazquez C."/>
            <person name="Elosegui-Artola A."/>
            <person name="Kim D.S."/>
            <person name="De Juan-Pardo E."/>
            <person name="Demeyer K."/>
            <person name="Hole K."/>
            <person name="Larrea E."/>
            <person name="Timmerman E."/>
            <person name="Prieto J."/>
            <person name="Arnesen T."/>
            <person name="Sherman F."/>
            <person name="Gevaert K."/>
            <person name="Aldabe R."/>
        </authorList>
    </citation>
    <scope>ACETYLATION [LARGE SCALE ANALYSIS] AT ALA-2</scope>
    <scope>CLEAVAGE OF INITIATOR METHIONINE [LARGE SCALE ANALYSIS]</scope>
    <scope>IDENTIFICATION BY MASS SPECTROMETRY [LARGE SCALE ANALYSIS]</scope>
</reference>
<reference key="9">
    <citation type="journal article" date="2013" name="J. Proteome Res.">
        <title>Toward a comprehensive characterization of a human cancer cell phosphoproteome.</title>
        <authorList>
            <person name="Zhou H."/>
            <person name="Di Palma S."/>
            <person name="Preisinger C."/>
            <person name="Peng M."/>
            <person name="Polat A.N."/>
            <person name="Heck A.J."/>
            <person name="Mohammed S."/>
        </authorList>
    </citation>
    <scope>PHOSPHORYLATION [LARGE SCALE ANALYSIS] AT THR-75</scope>
    <scope>IDENTIFICATION BY MASS SPECTROMETRY [LARGE SCALE ANALYSIS]</scope>
    <source>
        <tissue>Cervix carcinoma</tissue>
        <tissue>Erythroleukemia</tissue>
    </source>
</reference>
<reference key="10">
    <citation type="journal article" date="2014" name="J. Proteomics">
        <title>An enzyme assisted RP-RPLC approach for in-depth analysis of human liver phosphoproteome.</title>
        <authorList>
            <person name="Bian Y."/>
            <person name="Song C."/>
            <person name="Cheng K."/>
            <person name="Dong M."/>
            <person name="Wang F."/>
            <person name="Huang J."/>
            <person name="Sun D."/>
            <person name="Wang L."/>
            <person name="Ye M."/>
            <person name="Zou H."/>
        </authorList>
    </citation>
    <scope>PHOSPHORYLATION [LARGE SCALE ANALYSIS] AT THR-75</scope>
    <scope>IDENTIFICATION BY MASS SPECTROMETRY [LARGE SCALE ANALYSIS]</scope>
    <source>
        <tissue>Liver</tissue>
    </source>
</reference>
<reference key="11">
    <citation type="journal article" date="2021" name="Nat. Commun.">
        <title>Lsm12 is an NAADP receptor and a two-pore channel regulatory protein required for calcium mobilization from acidic organelles.</title>
        <authorList>
            <person name="Zhang J."/>
            <person name="Guan X."/>
            <person name="Shah K."/>
            <person name="Yan J."/>
        </authorList>
    </citation>
    <scope>FUNCTION</scope>
    <scope>SUBCELLULAR LOCATION</scope>
    <scope>SUBUNIT</scope>
    <scope>MASS SPECTROMETRY</scope>
    <scope>INTERACTION WITH TPCN2</scope>
</reference>
<dbReference type="EMBL" id="AK055218">
    <property type="protein sequence ID" value="BAB70877.1"/>
    <property type="molecule type" value="mRNA"/>
</dbReference>
<dbReference type="EMBL" id="AC023855">
    <property type="status" value="NOT_ANNOTATED_CDS"/>
    <property type="molecule type" value="Genomic_DNA"/>
</dbReference>
<dbReference type="EMBL" id="KF456277">
    <property type="status" value="NOT_ANNOTATED_CDS"/>
    <property type="molecule type" value="Genomic_DNA"/>
</dbReference>
<dbReference type="EMBL" id="BC044587">
    <property type="protein sequence ID" value="AAH44587.1"/>
    <property type="molecule type" value="mRNA"/>
</dbReference>
<dbReference type="EMBL" id="BC105288">
    <property type="protein sequence ID" value="AAI05289.1"/>
    <property type="molecule type" value="mRNA"/>
</dbReference>
<dbReference type="CCDS" id="CCDS11475.1">
    <molecule id="Q3MHD2-1"/>
</dbReference>
<dbReference type="RefSeq" id="NP_001358374.1">
    <molecule id="Q3MHD2-1"/>
    <property type="nucleotide sequence ID" value="NM_001371445.1"/>
</dbReference>
<dbReference type="RefSeq" id="NP_689557.1">
    <molecule id="Q3MHD2-1"/>
    <property type="nucleotide sequence ID" value="NM_152344.4"/>
</dbReference>
<dbReference type="BioGRID" id="125889">
    <property type="interactions" value="171"/>
</dbReference>
<dbReference type="FunCoup" id="Q3MHD2">
    <property type="interactions" value="1496"/>
</dbReference>
<dbReference type="IntAct" id="Q3MHD2">
    <property type="interactions" value="62"/>
</dbReference>
<dbReference type="MINT" id="Q3MHD2"/>
<dbReference type="STRING" id="9606.ENSP00000466718"/>
<dbReference type="ChEMBL" id="CHEMBL4295839"/>
<dbReference type="TCDB" id="8.A.243.1.1">
    <property type="family name" value="the nppdp-binding protein, lsm12 (lsm12) family"/>
</dbReference>
<dbReference type="GlyGen" id="Q3MHD2">
    <property type="glycosylation" value="1 site, 1 O-linked glycan (1 site)"/>
</dbReference>
<dbReference type="iPTMnet" id="Q3MHD2"/>
<dbReference type="PhosphoSitePlus" id="Q3MHD2"/>
<dbReference type="BioMuta" id="LSM12"/>
<dbReference type="DMDM" id="158705881"/>
<dbReference type="jPOST" id="Q3MHD2"/>
<dbReference type="MassIVE" id="Q3MHD2"/>
<dbReference type="PaxDb" id="9606-ENSP00000466718"/>
<dbReference type="PeptideAtlas" id="Q3MHD2"/>
<dbReference type="ProteomicsDB" id="61781">
    <molecule id="Q3MHD2-1"/>
</dbReference>
<dbReference type="ProteomicsDB" id="61782">
    <molecule id="Q3MHD2-2"/>
</dbReference>
<dbReference type="Pumba" id="Q3MHD2"/>
<dbReference type="Antibodypedia" id="29665">
    <property type="antibodies" value="91 antibodies from 22 providers"/>
</dbReference>
<dbReference type="DNASU" id="124801"/>
<dbReference type="Ensembl" id="ENST00000293406.8">
    <molecule id="Q3MHD2-1"/>
    <property type="protein sequence ID" value="ENSP00000293406.3"/>
    <property type="gene ID" value="ENSG00000161654.10"/>
</dbReference>
<dbReference type="Ensembl" id="ENST00000591247.6">
    <molecule id="Q3MHD2-1"/>
    <property type="protein sequence ID" value="ENSP00000466718.1"/>
    <property type="gene ID" value="ENSG00000161654.10"/>
</dbReference>
<dbReference type="GeneID" id="124801"/>
<dbReference type="KEGG" id="hsa:124801"/>
<dbReference type="MANE-Select" id="ENST00000293406.8">
    <property type="protein sequence ID" value="ENSP00000293406.3"/>
    <property type="RefSeq nucleotide sequence ID" value="NM_001371445.1"/>
    <property type="RefSeq protein sequence ID" value="NP_001358374.1"/>
</dbReference>
<dbReference type="UCSC" id="uc002iev.3">
    <molecule id="Q3MHD2-1"/>
    <property type="organism name" value="human"/>
</dbReference>
<dbReference type="AGR" id="HGNC:26407"/>
<dbReference type="CTD" id="124801"/>
<dbReference type="DisGeNET" id="124801"/>
<dbReference type="GeneCards" id="LSM12"/>
<dbReference type="HGNC" id="HGNC:26407">
    <property type="gene designation" value="LSM12"/>
</dbReference>
<dbReference type="HPA" id="ENSG00000161654">
    <property type="expression patterns" value="Low tissue specificity"/>
</dbReference>
<dbReference type="MIM" id="611793">
    <property type="type" value="gene"/>
</dbReference>
<dbReference type="neXtProt" id="NX_Q3MHD2"/>
<dbReference type="OpenTargets" id="ENSG00000161654"/>
<dbReference type="PharmGKB" id="PA142671502"/>
<dbReference type="VEuPathDB" id="HostDB:ENSG00000161654"/>
<dbReference type="eggNOG" id="KOG4401">
    <property type="taxonomic scope" value="Eukaryota"/>
</dbReference>
<dbReference type="GeneTree" id="ENSGT00390000006956"/>
<dbReference type="HOGENOM" id="CLU_073383_3_0_1"/>
<dbReference type="InParanoid" id="Q3MHD2"/>
<dbReference type="OMA" id="FEGELYC"/>
<dbReference type="OrthoDB" id="1057137at2759"/>
<dbReference type="PAN-GO" id="Q3MHD2">
    <property type="GO annotations" value="0 GO annotations based on evolutionary models"/>
</dbReference>
<dbReference type="PhylomeDB" id="Q3MHD2"/>
<dbReference type="PathwayCommons" id="Q3MHD2"/>
<dbReference type="SignaLink" id="Q3MHD2"/>
<dbReference type="BioGRID-ORCS" id="124801">
    <property type="hits" value="250 hits in 1156 CRISPR screens"/>
</dbReference>
<dbReference type="CD-CODE" id="232F8A39">
    <property type="entry name" value="P-body"/>
</dbReference>
<dbReference type="CD-CODE" id="DEE660B4">
    <property type="entry name" value="Stress granule"/>
</dbReference>
<dbReference type="ChiTaRS" id="LSM12">
    <property type="organism name" value="human"/>
</dbReference>
<dbReference type="GenomeRNAi" id="124801"/>
<dbReference type="Pharos" id="Q3MHD2">
    <property type="development level" value="Tbio"/>
</dbReference>
<dbReference type="PRO" id="PR:Q3MHD2"/>
<dbReference type="Proteomes" id="UP000005640">
    <property type="component" value="Chromosome 17"/>
</dbReference>
<dbReference type="RNAct" id="Q3MHD2">
    <property type="molecule type" value="protein"/>
</dbReference>
<dbReference type="Bgee" id="ENSG00000161654">
    <property type="expression patterns" value="Expressed in gingival epithelium and 206 other cell types or tissues"/>
</dbReference>
<dbReference type="ExpressionAtlas" id="Q3MHD2">
    <property type="expression patterns" value="baseline and differential"/>
</dbReference>
<dbReference type="GO" id="GO:0005737">
    <property type="term" value="C:cytoplasm"/>
    <property type="evidence" value="ECO:0000314"/>
    <property type="project" value="UniProtKB"/>
</dbReference>
<dbReference type="GO" id="GO:0003723">
    <property type="term" value="F:RNA binding"/>
    <property type="evidence" value="ECO:0007669"/>
    <property type="project" value="InterPro"/>
</dbReference>
<dbReference type="CDD" id="cd01735">
    <property type="entry name" value="LSm12_N"/>
    <property type="match status" value="1"/>
</dbReference>
<dbReference type="InterPro" id="IPR047574">
    <property type="entry name" value="AD"/>
</dbReference>
<dbReference type="InterPro" id="IPR039683">
    <property type="entry name" value="Lsm12-like"/>
</dbReference>
<dbReference type="InterPro" id="IPR019181">
    <property type="entry name" value="LSM12_ABD"/>
</dbReference>
<dbReference type="InterPro" id="IPR048478">
    <property type="entry name" value="LSM12_LSM"/>
</dbReference>
<dbReference type="InterPro" id="IPR047575">
    <property type="entry name" value="Sm"/>
</dbReference>
<dbReference type="PANTHER" id="PTHR13542">
    <property type="entry name" value="LSM12 HOMOLOG"/>
    <property type="match status" value="1"/>
</dbReference>
<dbReference type="Pfam" id="PF09793">
    <property type="entry name" value="AD"/>
    <property type="match status" value="1"/>
</dbReference>
<dbReference type="Pfam" id="PF21166">
    <property type="entry name" value="LSM12_LSM"/>
    <property type="match status" value="1"/>
</dbReference>
<dbReference type="SMART" id="SM00995">
    <property type="entry name" value="AD"/>
    <property type="match status" value="1"/>
</dbReference>
<dbReference type="PROSITE" id="PS52001">
    <property type="entry name" value="AD"/>
    <property type="match status" value="1"/>
</dbReference>
<dbReference type="PROSITE" id="PS52002">
    <property type="entry name" value="SM"/>
    <property type="match status" value="1"/>
</dbReference>
<evidence type="ECO:0000255" key="1">
    <source>
        <dbReference type="PROSITE-ProRule" id="PRU01345"/>
    </source>
</evidence>
<evidence type="ECO:0000255" key="2">
    <source>
        <dbReference type="PROSITE-ProRule" id="PRU01346"/>
    </source>
</evidence>
<evidence type="ECO:0000269" key="3">
    <source>
    </source>
</evidence>
<evidence type="ECO:0000269" key="4">
    <source>
    </source>
</evidence>
<evidence type="ECO:0000269" key="5">
    <source ref="4"/>
</evidence>
<evidence type="ECO:0000303" key="6">
    <source>
    </source>
</evidence>
<evidence type="ECO:0000305" key="7"/>
<evidence type="ECO:0007744" key="8">
    <source>
    </source>
</evidence>
<evidence type="ECO:0007744" key="9">
    <source>
    </source>
</evidence>
<evidence type="ECO:0007744" key="10">
    <source>
    </source>
</evidence>
<evidence type="ECO:0007744" key="11">
    <source>
    </source>
</evidence>
<evidence type="ECO:0007744" key="12">
    <source>
    </source>
</evidence>
<name>LSM12_HUMAN</name>
<comment type="function">
    <text evidence="4">Nicotinic acid adenine dinucleotide phosphate (NAADP) binding protein (PubMed:34362892). Confers NAADP sensitivity to the two pore channel complex (TPCs) by acting as TPC accessory protein necessary for NAADP-evoked Ca(2+) release (PubMed:34362892).</text>
</comment>
<comment type="subunit">
    <text evidence="4">Found in a complex with LSM12, TPCN1 and TPCN2 (PubMed:34362892). Interacts with TPCN2 (PubMed:34362892).</text>
</comment>
<comment type="interaction">
    <interactant intactId="EBI-725133">
        <id>Q3MHD2</id>
    </interactant>
    <interactant intactId="EBI-347416">
        <id>Q9Y333</id>
        <label>LSM2</label>
    </interactant>
    <organismsDiffer>false</organismsDiffer>
    <experiments>3</experiments>
</comment>
<comment type="interaction">
    <interactant intactId="EBI-725133">
        <id>Q3MHD2</id>
    </interactant>
    <interactant intactId="EBI-348239">
        <id>P62310</id>
        <label>LSM3</label>
    </interactant>
    <organismsDiffer>false</organismsDiffer>
    <experiments>3</experiments>
</comment>
<comment type="interaction">
    <interactant intactId="EBI-725133">
        <id>Q3MHD2</id>
    </interactant>
    <interactant intactId="EBI-741158">
        <id>Q96HA8</id>
        <label>NTAQ1</label>
    </interactant>
    <organismsDiffer>false</organismsDiffer>
    <experiments>3</experiments>
</comment>
<comment type="subcellular location">
    <subcellularLocation>
        <location evidence="4">Cytoplasm</location>
    </subcellularLocation>
    <text evidence="4">Colocalizes with TPCN2.</text>
</comment>
<comment type="alternative products">
    <event type="alternative splicing"/>
    <isoform>
        <id>Q3MHD2-1</id>
        <name>1</name>
        <sequence type="displayed"/>
    </isoform>
    <isoform>
        <id>Q3MHD2-2</id>
        <name>2</name>
        <sequence type="described" ref="VSP_028241"/>
    </isoform>
</comment>
<comment type="similarity">
    <text evidence="7">Belongs to the LSM12 family.</text>
</comment>
<feature type="initiator methionine" description="Removed" evidence="5 8 10">
    <location>
        <position position="1"/>
    </location>
</feature>
<feature type="chain" id="PRO_0000305126" description="Protein LSM12">
    <location>
        <begin position="2"/>
        <end position="195"/>
    </location>
</feature>
<feature type="domain" description="Sm" evidence="2">
    <location>
        <begin position="2"/>
        <end position="72"/>
    </location>
</feature>
<feature type="domain" description="AD" evidence="1">
    <location>
        <begin position="80"/>
        <end position="174"/>
    </location>
</feature>
<feature type="region of interest" description="Required for NAADP and TPCN2 binding" evidence="4">
    <location>
        <begin position="4"/>
        <end position="67"/>
    </location>
</feature>
<feature type="modified residue" description="N-acetylalanine" evidence="5 8 10">
    <location>
        <position position="2"/>
    </location>
</feature>
<feature type="modified residue" description="Phosphothreonine" evidence="9 11 12">
    <location>
        <position position="75"/>
    </location>
</feature>
<feature type="splice variant" id="VSP_028241" description="In isoform 2." evidence="6">
    <original>K</original>
    <variation>ISPE</variation>
    <location>
        <position position="42"/>
    </location>
</feature>
<feature type="sequence variant" id="VAR_035166" description="In dbSNP:rs17854322." evidence="3">
    <original>P</original>
    <variation>R</variation>
    <location>
        <position position="77"/>
    </location>
</feature>
<feature type="sequence variant" id="VAR_062209" description="In dbSNP:rs59168537.">
    <original>V</original>
    <variation>L</variation>
    <location>
        <position position="173"/>
    </location>
</feature>
<gene>
    <name type="primary">LSM12</name>
</gene>